<dbReference type="EMBL" id="CP000830">
    <property type="protein sequence ID" value="ABV94096.1"/>
    <property type="molecule type" value="Genomic_DNA"/>
</dbReference>
<dbReference type="RefSeq" id="WP_012179027.1">
    <property type="nucleotide sequence ID" value="NC_009952.1"/>
</dbReference>
<dbReference type="SMR" id="A8LRR5"/>
<dbReference type="STRING" id="398580.Dshi_2360"/>
<dbReference type="KEGG" id="dsh:Dshi_2360"/>
<dbReference type="eggNOG" id="COG0378">
    <property type="taxonomic scope" value="Bacteria"/>
</dbReference>
<dbReference type="HOGENOM" id="CLU_072144_1_0_5"/>
<dbReference type="OrthoDB" id="9802035at2"/>
<dbReference type="Proteomes" id="UP000006833">
    <property type="component" value="Chromosome"/>
</dbReference>
<dbReference type="GO" id="GO:0005737">
    <property type="term" value="C:cytoplasm"/>
    <property type="evidence" value="ECO:0007669"/>
    <property type="project" value="UniProtKB-SubCell"/>
</dbReference>
<dbReference type="GO" id="GO:0005525">
    <property type="term" value="F:GTP binding"/>
    <property type="evidence" value="ECO:0007669"/>
    <property type="project" value="UniProtKB-KW"/>
</dbReference>
<dbReference type="GO" id="GO:0003924">
    <property type="term" value="F:GTPase activity"/>
    <property type="evidence" value="ECO:0007669"/>
    <property type="project" value="InterPro"/>
</dbReference>
<dbReference type="GO" id="GO:0016151">
    <property type="term" value="F:nickel cation binding"/>
    <property type="evidence" value="ECO:0007669"/>
    <property type="project" value="UniProtKB-UniRule"/>
</dbReference>
<dbReference type="GO" id="GO:0043419">
    <property type="term" value="P:urea catabolic process"/>
    <property type="evidence" value="ECO:0007669"/>
    <property type="project" value="InterPro"/>
</dbReference>
<dbReference type="CDD" id="cd05540">
    <property type="entry name" value="UreG"/>
    <property type="match status" value="1"/>
</dbReference>
<dbReference type="Gene3D" id="3.40.50.300">
    <property type="entry name" value="P-loop containing nucleotide triphosphate hydrolases"/>
    <property type="match status" value="1"/>
</dbReference>
<dbReference type="HAMAP" id="MF_01389">
    <property type="entry name" value="UreG"/>
    <property type="match status" value="1"/>
</dbReference>
<dbReference type="InterPro" id="IPR003495">
    <property type="entry name" value="CobW/HypB/UreG_nucleotide-bd"/>
</dbReference>
<dbReference type="InterPro" id="IPR027417">
    <property type="entry name" value="P-loop_NTPase"/>
</dbReference>
<dbReference type="InterPro" id="IPR004400">
    <property type="entry name" value="UreG"/>
</dbReference>
<dbReference type="NCBIfam" id="TIGR00101">
    <property type="entry name" value="ureG"/>
    <property type="match status" value="1"/>
</dbReference>
<dbReference type="PANTHER" id="PTHR31715">
    <property type="entry name" value="UREASE ACCESSORY PROTEIN G"/>
    <property type="match status" value="1"/>
</dbReference>
<dbReference type="PANTHER" id="PTHR31715:SF0">
    <property type="entry name" value="UREASE ACCESSORY PROTEIN G"/>
    <property type="match status" value="1"/>
</dbReference>
<dbReference type="Pfam" id="PF02492">
    <property type="entry name" value="cobW"/>
    <property type="match status" value="1"/>
</dbReference>
<dbReference type="PIRSF" id="PIRSF005624">
    <property type="entry name" value="Ni-bind_GTPase"/>
    <property type="match status" value="1"/>
</dbReference>
<dbReference type="SUPFAM" id="SSF52540">
    <property type="entry name" value="P-loop containing nucleoside triphosphate hydrolases"/>
    <property type="match status" value="1"/>
</dbReference>
<comment type="function">
    <text evidence="1">Facilitates the functional incorporation of the urease nickel metallocenter. This process requires GTP hydrolysis, probably effectuated by UreG.</text>
</comment>
<comment type="subunit">
    <text evidence="1">Homodimer. UreD, UreF and UreG form a complex that acts as a GTP-hydrolysis-dependent molecular chaperone, activating the urease apoprotein by helping to assemble the nickel containing metallocenter of UreC. The UreE protein probably delivers the nickel.</text>
</comment>
<comment type="subcellular location">
    <subcellularLocation>
        <location evidence="1">Cytoplasm</location>
    </subcellularLocation>
</comment>
<comment type="similarity">
    <text evidence="1">Belongs to the SIMIBI class G3E GTPase family. UreG subfamily.</text>
</comment>
<reference key="1">
    <citation type="journal article" date="2010" name="ISME J.">
        <title>The complete genome sequence of the algal symbiont Dinoroseobacter shibae: a hitchhiker's guide to life in the sea.</title>
        <authorList>
            <person name="Wagner-Dobler I."/>
            <person name="Ballhausen B."/>
            <person name="Berger M."/>
            <person name="Brinkhoff T."/>
            <person name="Buchholz I."/>
            <person name="Bunk B."/>
            <person name="Cypionka H."/>
            <person name="Daniel R."/>
            <person name="Drepper T."/>
            <person name="Gerdts G."/>
            <person name="Hahnke S."/>
            <person name="Han C."/>
            <person name="Jahn D."/>
            <person name="Kalhoefer D."/>
            <person name="Kiss H."/>
            <person name="Klenk H.P."/>
            <person name="Kyrpides N."/>
            <person name="Liebl W."/>
            <person name="Liesegang H."/>
            <person name="Meincke L."/>
            <person name="Pati A."/>
            <person name="Petersen J."/>
            <person name="Piekarski T."/>
            <person name="Pommerenke C."/>
            <person name="Pradella S."/>
            <person name="Pukall R."/>
            <person name="Rabus R."/>
            <person name="Stackebrandt E."/>
            <person name="Thole S."/>
            <person name="Thompson L."/>
            <person name="Tielen P."/>
            <person name="Tomasch J."/>
            <person name="von Jan M."/>
            <person name="Wanphrut N."/>
            <person name="Wichels A."/>
            <person name="Zech H."/>
            <person name="Simon M."/>
        </authorList>
    </citation>
    <scope>NUCLEOTIDE SEQUENCE [LARGE SCALE GENOMIC DNA]</scope>
    <source>
        <strain>DSM 16493 / NCIMB 14021 / DFL 12</strain>
    </source>
</reference>
<evidence type="ECO:0000255" key="1">
    <source>
        <dbReference type="HAMAP-Rule" id="MF_01389"/>
    </source>
</evidence>
<proteinExistence type="inferred from homology"/>
<feature type="chain" id="PRO_0000347388" description="Urease accessory protein UreG">
    <location>
        <begin position="1"/>
        <end position="202"/>
    </location>
</feature>
<feature type="binding site" evidence="1">
    <location>
        <begin position="13"/>
        <end position="20"/>
    </location>
    <ligand>
        <name>GTP</name>
        <dbReference type="ChEBI" id="CHEBI:37565"/>
    </ligand>
</feature>
<sequence length="202" mass="21265">MSEHGPLRIGIGGPVGAGKTTLTERLCAALRDDYSVAVITNDIYTSEDAEYLMRAQALPLERIRGVETGGCPHTAIREDASINLAAVADLRASFADLDVILIESGGDNLAATFSPELADLTIYVIDTAAGQDIPRKKGPGLARSDLLVINKTDLAPHVDVDLALLESDARTARGARPFVMAALKSGQGVAQIVAFLEREGGL</sequence>
<gene>
    <name evidence="1" type="primary">ureG</name>
    <name type="ordered locus">Dshi_2360</name>
</gene>
<organism>
    <name type="scientific">Dinoroseobacter shibae (strain DSM 16493 / NCIMB 14021 / DFL 12)</name>
    <dbReference type="NCBI Taxonomy" id="398580"/>
    <lineage>
        <taxon>Bacteria</taxon>
        <taxon>Pseudomonadati</taxon>
        <taxon>Pseudomonadota</taxon>
        <taxon>Alphaproteobacteria</taxon>
        <taxon>Rhodobacterales</taxon>
        <taxon>Roseobacteraceae</taxon>
        <taxon>Dinoroseobacter</taxon>
    </lineage>
</organism>
<protein>
    <recommendedName>
        <fullName evidence="1">Urease accessory protein UreG</fullName>
    </recommendedName>
</protein>
<keyword id="KW-0143">Chaperone</keyword>
<keyword id="KW-0963">Cytoplasm</keyword>
<keyword id="KW-0342">GTP-binding</keyword>
<keyword id="KW-0996">Nickel insertion</keyword>
<keyword id="KW-0547">Nucleotide-binding</keyword>
<keyword id="KW-1185">Reference proteome</keyword>
<accession>A8LRR5</accession>
<name>UREG_DINSH</name>